<proteinExistence type="predicted"/>
<organism>
    <name type="scientific">Lactobacillus acidophilus (strain ATCC 700396 / NCK56 / N2 / NCFM)</name>
    <dbReference type="NCBI Taxonomy" id="272621"/>
    <lineage>
        <taxon>Bacteria</taxon>
        <taxon>Bacillati</taxon>
        <taxon>Bacillota</taxon>
        <taxon>Bacilli</taxon>
        <taxon>Lactobacillales</taxon>
        <taxon>Lactobacillaceae</taxon>
        <taxon>Lactobacillus</taxon>
    </lineage>
</organism>
<sequence length="196" mass="22257">MNSKDYESTEFYSYKFKNFSTMIIIPMALLVFILIIGSFFAIRQSTVTSTGIVEPQSTLDIANKNYHEGQIIKRNRSKWMVHLDDKKENIVHLLPIIKAKKSVNIVTYFPGNKIGAIKKGQPLHFQLSNANGTTDRLVGEVKEVGIYPVNLHGNNVYEVICKAKLDKDVKYGMEGNAPIITGKSTYFEYFKDKILN</sequence>
<reference key="1">
    <citation type="journal article" date="2005" name="Proc. Natl. Acad. Sci. U.S.A.">
        <title>Complete genome sequence of the probiotic lactic acid bacterium Lactobacillus acidophilus NCFM.</title>
        <authorList>
            <person name="Altermann E."/>
            <person name="Russell W.M."/>
            <person name="Azcarate-Peril M.A."/>
            <person name="Barrangou R."/>
            <person name="Buck B.L."/>
            <person name="McAuliffe O."/>
            <person name="Souther N."/>
            <person name="Dobson A."/>
            <person name="Duong T."/>
            <person name="Callanan M."/>
            <person name="Lick S."/>
            <person name="Hamrick A."/>
            <person name="Cano R."/>
            <person name="Klaenhammer T.R."/>
        </authorList>
    </citation>
    <scope>NUCLEOTIDE SEQUENCE [LARGE SCALE GENOMIC DNA]</scope>
    <source>
        <strain>ATCC 700396 / NCK56 / N2 / NCFM</strain>
    </source>
</reference>
<evidence type="ECO:0000255" key="1"/>
<evidence type="ECO:0000305" key="2"/>
<name>Y1794_LACAC</name>
<feature type="chain" id="PRO_0000066074" description="Uncharacterized protein LBA1794">
    <location>
        <begin position="1"/>
        <end position="196"/>
    </location>
</feature>
<feature type="transmembrane region" description="Helical" evidence="1">
    <location>
        <begin position="22"/>
        <end position="42"/>
    </location>
</feature>
<dbReference type="EMBL" id="CP000033">
    <property type="protein sequence ID" value="AAV43599.1"/>
    <property type="molecule type" value="Genomic_DNA"/>
</dbReference>
<dbReference type="RefSeq" id="WP_011254575.1">
    <property type="nucleotide sequence ID" value="NC_006814.3"/>
</dbReference>
<dbReference type="RefSeq" id="YP_194630.1">
    <property type="nucleotide sequence ID" value="NC_006814.3"/>
</dbReference>
<dbReference type="SMR" id="Q5FI75"/>
<dbReference type="STRING" id="272621.LBA1794"/>
<dbReference type="KEGG" id="lac:LBA1794"/>
<dbReference type="PATRIC" id="fig|272621.13.peg.1706"/>
<dbReference type="eggNOG" id="COG0845">
    <property type="taxonomic scope" value="Bacteria"/>
</dbReference>
<dbReference type="HOGENOM" id="CLU_1293046_0_0_9"/>
<dbReference type="OrthoDB" id="2237368at2"/>
<dbReference type="BioCyc" id="LACI272621:G1G49-1755-MONOMER"/>
<dbReference type="Proteomes" id="UP000006381">
    <property type="component" value="Chromosome"/>
</dbReference>
<dbReference type="GO" id="GO:0005886">
    <property type="term" value="C:plasma membrane"/>
    <property type="evidence" value="ECO:0007669"/>
    <property type="project" value="UniProtKB-SubCell"/>
</dbReference>
<dbReference type="Gene3D" id="2.40.30.170">
    <property type="match status" value="1"/>
</dbReference>
<comment type="subcellular location">
    <subcellularLocation>
        <location evidence="2">Cell membrane</location>
        <topology evidence="2">Single-pass membrane protein</topology>
    </subcellularLocation>
</comment>
<accession>Q5FI75</accession>
<keyword id="KW-1003">Cell membrane</keyword>
<keyword id="KW-0472">Membrane</keyword>
<keyword id="KW-1185">Reference proteome</keyword>
<keyword id="KW-0812">Transmembrane</keyword>
<keyword id="KW-1133">Transmembrane helix</keyword>
<gene>
    <name type="ordered locus">LBA1794</name>
</gene>
<protein>
    <recommendedName>
        <fullName>Uncharacterized protein LBA1794</fullName>
    </recommendedName>
</protein>